<organism>
    <name type="scientific">Bacillus licheniformis (strain ATCC 14580 / DSM 13 / JCM 2505 / CCUG 7422 / NBRC 12200 / NCIMB 9375 / NCTC 10341 / NRRL NRS-1264 / Gibson 46)</name>
    <dbReference type="NCBI Taxonomy" id="279010"/>
    <lineage>
        <taxon>Bacteria</taxon>
        <taxon>Bacillati</taxon>
        <taxon>Bacillota</taxon>
        <taxon>Bacilli</taxon>
        <taxon>Bacillales</taxon>
        <taxon>Bacillaceae</taxon>
        <taxon>Bacillus</taxon>
    </lineage>
</organism>
<sequence length="379" mass="41209">MRIDEWLSSRLAKTKAAGLYRSLKLPQAERTNWASNDYLGLANDKRLIHAAETALRRFGAGSTGSRLTSGNTAWHEKLERKIAGFKQTEAALLFSSGYLANVGVLSSLPEKGDVILSDQLNHASIIDGCRLSKADTVVYRHKDMNDLEEKLRAAQSRARRFIVTDGVFSMDGTIAPLDEIMLLAKQYRAFVIVDDAHATGVLGEAGRGTSEYFGVSPDVVIGTLSKAVGAEGGFVAGSKTLIDFLLNHARTFIFQTAVPPASCAAACKALDIIEDSRAKRRLLQSSVNTIKRSLVDIGFTVNGEDTPIIPVMIGDPQKAVQFANGLKEKGIEAPAIRPPTVAEGESRIRLTVTAERRLKDIEDLLEGFKLMGRELNLVK</sequence>
<proteinExistence type="inferred from homology"/>
<accession>Q65ML1</accession>
<accession>Q62Y04</accession>
<keyword id="KW-0093">Biotin biosynthesis</keyword>
<keyword id="KW-0663">Pyridoxal phosphate</keyword>
<keyword id="KW-1185">Reference proteome</keyword>
<keyword id="KW-0808">Transferase</keyword>
<feature type="chain" id="PRO_0000380918" description="Putative 8-amino-7-oxononanoate synthase">
    <location>
        <begin position="1"/>
        <end position="379"/>
    </location>
</feature>
<feature type="binding site" evidence="1">
    <location>
        <position position="21"/>
    </location>
    <ligand>
        <name>substrate</name>
    </ligand>
</feature>
<feature type="binding site" evidence="1">
    <location>
        <begin position="97"/>
        <end position="98"/>
    </location>
    <ligand>
        <name>pyridoxal 5'-phosphate</name>
        <dbReference type="ChEBI" id="CHEBI:597326"/>
    </ligand>
</feature>
<feature type="binding site" evidence="1">
    <location>
        <position position="122"/>
    </location>
    <ligand>
        <name>substrate</name>
    </ligand>
</feature>
<feature type="binding site" evidence="1">
    <location>
        <position position="169"/>
    </location>
    <ligand>
        <name>pyridoxal 5'-phosphate</name>
        <dbReference type="ChEBI" id="CHEBI:597326"/>
    </ligand>
</feature>
<feature type="binding site" evidence="1">
    <location>
        <begin position="194"/>
        <end position="197"/>
    </location>
    <ligand>
        <name>pyridoxal 5'-phosphate</name>
        <dbReference type="ChEBI" id="CHEBI:597326"/>
    </ligand>
</feature>
<feature type="binding site" evidence="1">
    <location>
        <begin position="223"/>
        <end position="226"/>
    </location>
    <ligand>
        <name>pyridoxal 5'-phosphate</name>
        <dbReference type="ChEBI" id="CHEBI:597326"/>
    </ligand>
</feature>
<feature type="binding site" evidence="1">
    <location>
        <position position="340"/>
    </location>
    <ligand>
        <name>substrate</name>
    </ligand>
</feature>
<feature type="modified residue" description="N6-(pyridoxal phosphate)lysine" evidence="1">
    <location>
        <position position="226"/>
    </location>
</feature>
<name>BIOF_BACLD</name>
<gene>
    <name type="primary">bioF</name>
    <name type="ordered locus">BLi00768</name>
    <name type="ordered locus">BL00954</name>
</gene>
<reference key="1">
    <citation type="journal article" date="2004" name="J. Mol. Microbiol. Biotechnol.">
        <title>The complete genome sequence of Bacillus licheniformis DSM13, an organism with great industrial potential.</title>
        <authorList>
            <person name="Veith B."/>
            <person name="Herzberg C."/>
            <person name="Steckel S."/>
            <person name="Feesche J."/>
            <person name="Maurer K.H."/>
            <person name="Ehrenreich P."/>
            <person name="Baeumer S."/>
            <person name="Henne A."/>
            <person name="Liesegang H."/>
            <person name="Merkl R."/>
            <person name="Ehrenreich A."/>
            <person name="Gottschalk G."/>
        </authorList>
    </citation>
    <scope>NUCLEOTIDE SEQUENCE [LARGE SCALE GENOMIC DNA]</scope>
    <source>
        <strain>ATCC 14580 / DSM 13 / JCM 2505 / CCUG 7422 / NBRC 12200 / NCIMB 9375 / NCTC 10341 / NRRL NRS-1264 / Gibson 46</strain>
    </source>
</reference>
<reference key="2">
    <citation type="journal article" date="2004" name="Genome Biol.">
        <title>Complete genome sequence of the industrial bacterium Bacillus licheniformis and comparisons with closely related Bacillus species.</title>
        <authorList>
            <person name="Rey M.W."/>
            <person name="Ramaiya P."/>
            <person name="Nelson B.A."/>
            <person name="Brody-Karpin S.D."/>
            <person name="Zaretsky E.J."/>
            <person name="Tang M."/>
            <person name="Lopez de Leon A."/>
            <person name="Xiang H."/>
            <person name="Gusti V."/>
            <person name="Clausen I.G."/>
            <person name="Olsen P.B."/>
            <person name="Rasmussen M.D."/>
            <person name="Andersen J.T."/>
            <person name="Joergensen P.L."/>
            <person name="Larsen T.S."/>
            <person name="Sorokin A."/>
            <person name="Bolotin A."/>
            <person name="Lapidus A."/>
            <person name="Galleron N."/>
            <person name="Ehrlich S.D."/>
            <person name="Berka R.M."/>
        </authorList>
    </citation>
    <scope>NUCLEOTIDE SEQUENCE [LARGE SCALE GENOMIC DNA]</scope>
    <source>
        <strain>ATCC 14580 / DSM 13 / JCM 2505 / CCUG 7422 / NBRC 12200 / NCIMB 9375 / NCTC 10341 / NRRL NRS-1264 / Gibson 46</strain>
    </source>
</reference>
<dbReference type="EC" id="2.3.1.47"/>
<dbReference type="EMBL" id="CP000002">
    <property type="protein sequence ID" value="AAU22354.1"/>
    <property type="molecule type" value="Genomic_DNA"/>
</dbReference>
<dbReference type="EMBL" id="AE017333">
    <property type="protein sequence ID" value="AAU39703.1"/>
    <property type="molecule type" value="Genomic_DNA"/>
</dbReference>
<dbReference type="RefSeq" id="WP_003179689.1">
    <property type="nucleotide sequence ID" value="NC_006322.1"/>
</dbReference>
<dbReference type="SMR" id="Q65ML1"/>
<dbReference type="STRING" id="279010.BL00954"/>
<dbReference type="GeneID" id="92862650"/>
<dbReference type="KEGG" id="bld:BLi00768"/>
<dbReference type="KEGG" id="bli:BL00954"/>
<dbReference type="eggNOG" id="COG0156">
    <property type="taxonomic scope" value="Bacteria"/>
</dbReference>
<dbReference type="HOGENOM" id="CLU_015846_11_3_9"/>
<dbReference type="UniPathway" id="UPA00078"/>
<dbReference type="Proteomes" id="UP000000606">
    <property type="component" value="Chromosome"/>
</dbReference>
<dbReference type="GO" id="GO:0008710">
    <property type="term" value="F:8-amino-7-oxononanoate synthase activity"/>
    <property type="evidence" value="ECO:0007669"/>
    <property type="project" value="UniProtKB-EC"/>
</dbReference>
<dbReference type="GO" id="GO:0030170">
    <property type="term" value="F:pyridoxal phosphate binding"/>
    <property type="evidence" value="ECO:0007669"/>
    <property type="project" value="InterPro"/>
</dbReference>
<dbReference type="GO" id="GO:0009102">
    <property type="term" value="P:biotin biosynthetic process"/>
    <property type="evidence" value="ECO:0007669"/>
    <property type="project" value="UniProtKB-UniPathway"/>
</dbReference>
<dbReference type="CDD" id="cd06454">
    <property type="entry name" value="KBL_like"/>
    <property type="match status" value="1"/>
</dbReference>
<dbReference type="FunFam" id="3.40.640.10:FF:000006">
    <property type="entry name" value="5-aminolevulinate synthase, mitochondrial"/>
    <property type="match status" value="1"/>
</dbReference>
<dbReference type="Gene3D" id="3.90.1150.10">
    <property type="entry name" value="Aspartate Aminotransferase, domain 1"/>
    <property type="match status" value="1"/>
</dbReference>
<dbReference type="Gene3D" id="3.40.640.10">
    <property type="entry name" value="Type I PLP-dependent aspartate aminotransferase-like (Major domain)"/>
    <property type="match status" value="1"/>
</dbReference>
<dbReference type="InterPro" id="IPR001917">
    <property type="entry name" value="Aminotrans_II_pyridoxalP_BS"/>
</dbReference>
<dbReference type="InterPro" id="IPR004839">
    <property type="entry name" value="Aminotransferase_I/II_large"/>
</dbReference>
<dbReference type="InterPro" id="IPR050087">
    <property type="entry name" value="AON_synthase_class-II"/>
</dbReference>
<dbReference type="InterPro" id="IPR004723">
    <property type="entry name" value="AONS_Archaea/Proteobacteria"/>
</dbReference>
<dbReference type="InterPro" id="IPR015424">
    <property type="entry name" value="PyrdxlP-dep_Trfase"/>
</dbReference>
<dbReference type="InterPro" id="IPR015421">
    <property type="entry name" value="PyrdxlP-dep_Trfase_major"/>
</dbReference>
<dbReference type="InterPro" id="IPR015422">
    <property type="entry name" value="PyrdxlP-dep_Trfase_small"/>
</dbReference>
<dbReference type="NCBIfam" id="TIGR00858">
    <property type="entry name" value="bioF"/>
    <property type="match status" value="1"/>
</dbReference>
<dbReference type="PANTHER" id="PTHR13693">
    <property type="entry name" value="CLASS II AMINOTRANSFERASE/8-AMINO-7-OXONONANOATE SYNTHASE"/>
    <property type="match status" value="1"/>
</dbReference>
<dbReference type="PANTHER" id="PTHR13693:SF3">
    <property type="entry name" value="LD36009P"/>
    <property type="match status" value="1"/>
</dbReference>
<dbReference type="Pfam" id="PF00155">
    <property type="entry name" value="Aminotran_1_2"/>
    <property type="match status" value="1"/>
</dbReference>
<dbReference type="SUPFAM" id="SSF53383">
    <property type="entry name" value="PLP-dependent transferases"/>
    <property type="match status" value="1"/>
</dbReference>
<dbReference type="PROSITE" id="PS00599">
    <property type="entry name" value="AA_TRANSFER_CLASS_2"/>
    <property type="match status" value="1"/>
</dbReference>
<comment type="function">
    <text evidence="1">Catalyzes the decarboxylative condensation of pimeloyl-[acyl-carrier protein] and L-alanine to produce 8-amino-7-oxononanoate (AON), [acyl-carrier protein], and carbon dioxide.</text>
</comment>
<comment type="catalytic activity">
    <reaction>
        <text>6-carboxyhexanoyl-[ACP] + L-alanine + H(+) = (8S)-8-amino-7-oxononanoate + holo-[ACP] + CO2</text>
        <dbReference type="Rhea" id="RHEA:42288"/>
        <dbReference type="Rhea" id="RHEA-COMP:9685"/>
        <dbReference type="Rhea" id="RHEA-COMP:9955"/>
        <dbReference type="ChEBI" id="CHEBI:15378"/>
        <dbReference type="ChEBI" id="CHEBI:16526"/>
        <dbReference type="ChEBI" id="CHEBI:57972"/>
        <dbReference type="ChEBI" id="CHEBI:64479"/>
        <dbReference type="ChEBI" id="CHEBI:78846"/>
        <dbReference type="ChEBI" id="CHEBI:149468"/>
        <dbReference type="EC" id="2.3.1.47"/>
    </reaction>
</comment>
<comment type="cofactor">
    <cofactor evidence="1">
        <name>pyridoxal 5'-phosphate</name>
        <dbReference type="ChEBI" id="CHEBI:597326"/>
    </cofactor>
</comment>
<comment type="pathway">
    <text>Cofactor biosynthesis; biotin biosynthesis.</text>
</comment>
<comment type="subunit">
    <text evidence="1">Homodimer.</text>
</comment>
<comment type="similarity">
    <text evidence="2">Belongs to the class-II pyridoxal-phosphate-dependent aminotransferase family. BioF subfamily.</text>
</comment>
<protein>
    <recommendedName>
        <fullName>Putative 8-amino-7-oxononanoate synthase</fullName>
        <shortName>AONS</shortName>
        <ecNumber>2.3.1.47</ecNumber>
    </recommendedName>
    <alternativeName>
        <fullName>7-keto-8-amino-pelargonic acid synthase</fullName>
        <shortName>7-KAP synthase</shortName>
    </alternativeName>
    <alternativeName>
        <fullName>8-amino-7-ketopelargonate synthase</fullName>
    </alternativeName>
</protein>
<evidence type="ECO:0000250" key="1"/>
<evidence type="ECO:0000305" key="2"/>